<name>TM201_MOUSE</name>
<reference key="1">
    <citation type="journal article" date="2005" name="Science">
        <title>The transcriptional landscape of the mammalian genome.</title>
        <authorList>
            <person name="Carninci P."/>
            <person name="Kasukawa T."/>
            <person name="Katayama S."/>
            <person name="Gough J."/>
            <person name="Frith M.C."/>
            <person name="Maeda N."/>
            <person name="Oyama R."/>
            <person name="Ravasi T."/>
            <person name="Lenhard B."/>
            <person name="Wells C."/>
            <person name="Kodzius R."/>
            <person name="Shimokawa K."/>
            <person name="Bajic V.B."/>
            <person name="Brenner S.E."/>
            <person name="Batalov S."/>
            <person name="Forrest A.R."/>
            <person name="Zavolan M."/>
            <person name="Davis M.J."/>
            <person name="Wilming L.G."/>
            <person name="Aidinis V."/>
            <person name="Allen J.E."/>
            <person name="Ambesi-Impiombato A."/>
            <person name="Apweiler R."/>
            <person name="Aturaliya R.N."/>
            <person name="Bailey T.L."/>
            <person name="Bansal M."/>
            <person name="Baxter L."/>
            <person name="Beisel K.W."/>
            <person name="Bersano T."/>
            <person name="Bono H."/>
            <person name="Chalk A.M."/>
            <person name="Chiu K.P."/>
            <person name="Choudhary V."/>
            <person name="Christoffels A."/>
            <person name="Clutterbuck D.R."/>
            <person name="Crowe M.L."/>
            <person name="Dalla E."/>
            <person name="Dalrymple B.P."/>
            <person name="de Bono B."/>
            <person name="Della Gatta G."/>
            <person name="di Bernardo D."/>
            <person name="Down T."/>
            <person name="Engstrom P."/>
            <person name="Fagiolini M."/>
            <person name="Faulkner G."/>
            <person name="Fletcher C.F."/>
            <person name="Fukushima T."/>
            <person name="Furuno M."/>
            <person name="Futaki S."/>
            <person name="Gariboldi M."/>
            <person name="Georgii-Hemming P."/>
            <person name="Gingeras T.R."/>
            <person name="Gojobori T."/>
            <person name="Green R.E."/>
            <person name="Gustincich S."/>
            <person name="Harbers M."/>
            <person name="Hayashi Y."/>
            <person name="Hensch T.K."/>
            <person name="Hirokawa N."/>
            <person name="Hill D."/>
            <person name="Huminiecki L."/>
            <person name="Iacono M."/>
            <person name="Ikeo K."/>
            <person name="Iwama A."/>
            <person name="Ishikawa T."/>
            <person name="Jakt M."/>
            <person name="Kanapin A."/>
            <person name="Katoh M."/>
            <person name="Kawasawa Y."/>
            <person name="Kelso J."/>
            <person name="Kitamura H."/>
            <person name="Kitano H."/>
            <person name="Kollias G."/>
            <person name="Krishnan S.P."/>
            <person name="Kruger A."/>
            <person name="Kummerfeld S.K."/>
            <person name="Kurochkin I.V."/>
            <person name="Lareau L.F."/>
            <person name="Lazarevic D."/>
            <person name="Lipovich L."/>
            <person name="Liu J."/>
            <person name="Liuni S."/>
            <person name="McWilliam S."/>
            <person name="Madan Babu M."/>
            <person name="Madera M."/>
            <person name="Marchionni L."/>
            <person name="Matsuda H."/>
            <person name="Matsuzawa S."/>
            <person name="Miki H."/>
            <person name="Mignone F."/>
            <person name="Miyake S."/>
            <person name="Morris K."/>
            <person name="Mottagui-Tabar S."/>
            <person name="Mulder N."/>
            <person name="Nakano N."/>
            <person name="Nakauchi H."/>
            <person name="Ng P."/>
            <person name="Nilsson R."/>
            <person name="Nishiguchi S."/>
            <person name="Nishikawa S."/>
            <person name="Nori F."/>
            <person name="Ohara O."/>
            <person name="Okazaki Y."/>
            <person name="Orlando V."/>
            <person name="Pang K.C."/>
            <person name="Pavan W.J."/>
            <person name="Pavesi G."/>
            <person name="Pesole G."/>
            <person name="Petrovsky N."/>
            <person name="Piazza S."/>
            <person name="Reed J."/>
            <person name="Reid J.F."/>
            <person name="Ring B.Z."/>
            <person name="Ringwald M."/>
            <person name="Rost B."/>
            <person name="Ruan Y."/>
            <person name="Salzberg S.L."/>
            <person name="Sandelin A."/>
            <person name="Schneider C."/>
            <person name="Schoenbach C."/>
            <person name="Sekiguchi K."/>
            <person name="Semple C.A."/>
            <person name="Seno S."/>
            <person name="Sessa L."/>
            <person name="Sheng Y."/>
            <person name="Shibata Y."/>
            <person name="Shimada H."/>
            <person name="Shimada K."/>
            <person name="Silva D."/>
            <person name="Sinclair B."/>
            <person name="Sperling S."/>
            <person name="Stupka E."/>
            <person name="Sugiura K."/>
            <person name="Sultana R."/>
            <person name="Takenaka Y."/>
            <person name="Taki K."/>
            <person name="Tammoja K."/>
            <person name="Tan S.L."/>
            <person name="Tang S."/>
            <person name="Taylor M.S."/>
            <person name="Tegner J."/>
            <person name="Teichmann S.A."/>
            <person name="Ueda H.R."/>
            <person name="van Nimwegen E."/>
            <person name="Verardo R."/>
            <person name="Wei C.L."/>
            <person name="Yagi K."/>
            <person name="Yamanishi H."/>
            <person name="Zabarovsky E."/>
            <person name="Zhu S."/>
            <person name="Zimmer A."/>
            <person name="Hide W."/>
            <person name="Bult C."/>
            <person name="Grimmond S.M."/>
            <person name="Teasdale R.D."/>
            <person name="Liu E.T."/>
            <person name="Brusic V."/>
            <person name="Quackenbush J."/>
            <person name="Wahlestedt C."/>
            <person name="Mattick J.S."/>
            <person name="Hume D.A."/>
            <person name="Kai C."/>
            <person name="Sasaki D."/>
            <person name="Tomaru Y."/>
            <person name="Fukuda S."/>
            <person name="Kanamori-Katayama M."/>
            <person name="Suzuki M."/>
            <person name="Aoki J."/>
            <person name="Arakawa T."/>
            <person name="Iida J."/>
            <person name="Imamura K."/>
            <person name="Itoh M."/>
            <person name="Kato T."/>
            <person name="Kawaji H."/>
            <person name="Kawagashira N."/>
            <person name="Kawashima T."/>
            <person name="Kojima M."/>
            <person name="Kondo S."/>
            <person name="Konno H."/>
            <person name="Nakano K."/>
            <person name="Ninomiya N."/>
            <person name="Nishio T."/>
            <person name="Okada M."/>
            <person name="Plessy C."/>
            <person name="Shibata K."/>
            <person name="Shiraki T."/>
            <person name="Suzuki S."/>
            <person name="Tagami M."/>
            <person name="Waki K."/>
            <person name="Watahiki A."/>
            <person name="Okamura-Oho Y."/>
            <person name="Suzuki H."/>
            <person name="Kawai J."/>
            <person name="Hayashizaki Y."/>
        </authorList>
    </citation>
    <scope>NUCLEOTIDE SEQUENCE [LARGE SCALE MRNA] (ISOFORM 1)</scope>
    <source>
        <strain>C57BL/6J</strain>
        <tissue>Thymus</tissue>
    </source>
</reference>
<reference key="2">
    <citation type="journal article" date="2009" name="PLoS Biol.">
        <title>Lineage-specific biology revealed by a finished genome assembly of the mouse.</title>
        <authorList>
            <person name="Church D.M."/>
            <person name="Goodstadt L."/>
            <person name="Hillier L.W."/>
            <person name="Zody M.C."/>
            <person name="Goldstein S."/>
            <person name="She X."/>
            <person name="Bult C.J."/>
            <person name="Agarwala R."/>
            <person name="Cherry J.L."/>
            <person name="DiCuccio M."/>
            <person name="Hlavina W."/>
            <person name="Kapustin Y."/>
            <person name="Meric P."/>
            <person name="Maglott D."/>
            <person name="Birtle Z."/>
            <person name="Marques A.C."/>
            <person name="Graves T."/>
            <person name="Zhou S."/>
            <person name="Teague B."/>
            <person name="Potamousis K."/>
            <person name="Churas C."/>
            <person name="Place M."/>
            <person name="Herschleb J."/>
            <person name="Runnheim R."/>
            <person name="Forrest D."/>
            <person name="Amos-Landgraf J."/>
            <person name="Schwartz D.C."/>
            <person name="Cheng Z."/>
            <person name="Lindblad-Toh K."/>
            <person name="Eichler E.E."/>
            <person name="Ponting C.P."/>
        </authorList>
    </citation>
    <scope>NUCLEOTIDE SEQUENCE [LARGE SCALE GENOMIC DNA]</scope>
    <source>
        <strain>C57BL/6J</strain>
    </source>
</reference>
<reference key="3">
    <citation type="journal article" date="2004" name="Genome Res.">
        <title>The status, quality, and expansion of the NIH full-length cDNA project: the Mammalian Gene Collection (MGC).</title>
        <authorList>
            <consortium name="The MGC Project Team"/>
        </authorList>
    </citation>
    <scope>NUCLEOTIDE SEQUENCE [LARGE SCALE MRNA] (ISOFORM 3)</scope>
    <source>
        <strain>C57BL/6J</strain>
        <tissue>Brain</tissue>
    </source>
</reference>
<reference key="4">
    <citation type="journal article" date="2010" name="Cell">
        <title>A tissue-specific atlas of mouse protein phosphorylation and expression.</title>
        <authorList>
            <person name="Huttlin E.L."/>
            <person name="Jedrychowski M.P."/>
            <person name="Elias J.E."/>
            <person name="Goswami T."/>
            <person name="Rad R."/>
            <person name="Beausoleil S.A."/>
            <person name="Villen J."/>
            <person name="Haas W."/>
            <person name="Sowa M.E."/>
            <person name="Gygi S.P."/>
        </authorList>
    </citation>
    <scope>IDENTIFICATION BY MASS SPECTROMETRY [LARGE SCALE ANALYSIS]</scope>
    <source>
        <tissue>Heart</tissue>
    </source>
</reference>
<reference key="5">
    <citation type="journal article" date="2012" name="J. Cell Sci.">
        <title>Samp1 is a component of TAN lines and is required for nuclear movement.</title>
        <authorList>
            <person name="Borrego-Pinto J."/>
            <person name="Jegou T."/>
            <person name="Osorio D.S."/>
            <person name="Aurade F."/>
            <person name="Gorjanacz M."/>
            <person name="Koch B."/>
            <person name="Mattaj I.W."/>
            <person name="Gomes E.R."/>
        </authorList>
    </citation>
    <scope>FUNCTION</scope>
    <scope>SUBCELLULAR LOCATION</scope>
    <scope>INTERACTION WITH SUN2 AND LMNA</scope>
</reference>
<reference key="6">
    <citation type="journal article" date="2022" name="J. Mol. Cell Biol.">
        <title>Inner nuclear membrane protein TMEM201 maintains endothelial cell migration and angiogenesis by interacting with the LINC complex.</title>
        <authorList>
            <person name="Zhang Y."/>
            <person name="Kong Y."/>
            <person name="Guo H."/>
            <person name="Liu Y."/>
            <person name="Zang Y."/>
            <person name="Li J."/>
        </authorList>
    </citation>
    <scope>FUNCTION</scope>
    <scope>DISRUPTION PHENOTYPE</scope>
</reference>
<protein>
    <recommendedName>
        <fullName>Transmembrane protein 201</fullName>
    </recommendedName>
    <alternativeName>
        <fullName>Spindle-associated membrane protein 1</fullName>
    </alternativeName>
</protein>
<organism>
    <name type="scientific">Mus musculus</name>
    <name type="common">Mouse</name>
    <dbReference type="NCBI Taxonomy" id="10090"/>
    <lineage>
        <taxon>Eukaryota</taxon>
        <taxon>Metazoa</taxon>
        <taxon>Chordata</taxon>
        <taxon>Craniata</taxon>
        <taxon>Vertebrata</taxon>
        <taxon>Euteleostomi</taxon>
        <taxon>Mammalia</taxon>
        <taxon>Eutheria</taxon>
        <taxon>Euarchontoglires</taxon>
        <taxon>Glires</taxon>
        <taxon>Rodentia</taxon>
        <taxon>Myomorpha</taxon>
        <taxon>Muroidea</taxon>
        <taxon>Muridae</taxon>
        <taxon>Murinae</taxon>
        <taxon>Mus</taxon>
        <taxon>Mus</taxon>
    </lineage>
</organism>
<feature type="chain" id="PRO_0000317199" description="Transmembrane protein 201">
    <location>
        <begin position="1"/>
        <end position="664"/>
    </location>
</feature>
<feature type="topological domain" description="Nuclear" evidence="1">
    <location>
        <begin position="1"/>
        <end position="214"/>
    </location>
</feature>
<feature type="transmembrane region" description="Helical" evidence="2">
    <location>
        <begin position="215"/>
        <end position="235"/>
    </location>
</feature>
<feature type="topological domain" description="Perinuclear space" evidence="7">
    <location>
        <begin position="236"/>
        <end position="297"/>
    </location>
</feature>
<feature type="transmembrane region" description="Helical" evidence="2">
    <location>
        <begin position="298"/>
        <end position="318"/>
    </location>
</feature>
<feature type="topological domain" description="Nuclear" evidence="7">
    <location>
        <begin position="319"/>
        <end position="322"/>
    </location>
</feature>
<feature type="transmembrane region" description="Helical" evidence="2">
    <location>
        <begin position="323"/>
        <end position="343"/>
    </location>
</feature>
<feature type="topological domain" description="Perinuclear space" evidence="7">
    <location>
        <begin position="344"/>
        <end position="356"/>
    </location>
</feature>
<feature type="transmembrane region" description="Helical" evidence="2">
    <location>
        <begin position="357"/>
        <end position="374"/>
    </location>
</feature>
<feature type="topological domain" description="Nuclear" evidence="1 7">
    <location>
        <begin position="375"/>
        <end position="642"/>
    </location>
</feature>
<feature type="transmembrane region" description="Helical" evidence="2">
    <location>
        <begin position="643"/>
        <end position="663"/>
    </location>
</feature>
<feature type="topological domain" description="Perinuclear space" evidence="7">
    <location>
        <position position="664"/>
    </location>
</feature>
<feature type="region of interest" description="Disordered" evidence="3">
    <location>
        <begin position="245"/>
        <end position="264"/>
    </location>
</feature>
<feature type="region of interest" description="Disordered" evidence="3">
    <location>
        <begin position="502"/>
        <end position="522"/>
    </location>
</feature>
<feature type="region of interest" description="Disordered" evidence="3">
    <location>
        <begin position="544"/>
        <end position="629"/>
    </location>
</feature>
<feature type="compositionally biased region" description="Low complexity" evidence="3">
    <location>
        <begin position="245"/>
        <end position="261"/>
    </location>
</feature>
<feature type="compositionally biased region" description="Low complexity" evidence="3">
    <location>
        <begin position="508"/>
        <end position="520"/>
    </location>
</feature>
<feature type="compositionally biased region" description="Basic and acidic residues" evidence="3">
    <location>
        <begin position="578"/>
        <end position="587"/>
    </location>
</feature>
<feature type="compositionally biased region" description="Basic and acidic residues" evidence="3">
    <location>
        <begin position="595"/>
        <end position="608"/>
    </location>
</feature>
<feature type="compositionally biased region" description="Polar residues" evidence="3">
    <location>
        <begin position="610"/>
        <end position="628"/>
    </location>
</feature>
<feature type="modified residue" description="N-acetylmethionine" evidence="1">
    <location>
        <position position="1"/>
    </location>
</feature>
<feature type="modified residue" description="Phosphoserine" evidence="1">
    <location>
        <position position="441"/>
    </location>
</feature>
<feature type="modified residue" description="Phosphoserine" evidence="1">
    <location>
        <position position="444"/>
    </location>
</feature>
<feature type="modified residue" description="Phosphoserine" evidence="1">
    <location>
        <position position="450"/>
    </location>
</feature>
<feature type="modified residue" description="Phosphoserine" evidence="1">
    <location>
        <position position="454"/>
    </location>
</feature>
<feature type="modified residue" description="Phosphoserine" evidence="1">
    <location>
        <position position="466"/>
    </location>
</feature>
<feature type="modified residue" description="Phosphoserine" evidence="1">
    <location>
        <position position="477"/>
    </location>
</feature>
<feature type="modified residue" description="Phosphoserine" evidence="1">
    <location>
        <position position="480"/>
    </location>
</feature>
<feature type="modified residue" description="Phosphoserine" evidence="1">
    <location>
        <position position="529"/>
    </location>
</feature>
<feature type="splice variant" id="VSP_030917" description="In isoform 2." evidence="7">
    <original>YFSGD</original>
    <variation>SEKQQ</variation>
    <location>
        <begin position="388"/>
        <end position="392"/>
    </location>
</feature>
<feature type="splice variant" id="VSP_030918" description="In isoform 2." evidence="7">
    <location>
        <begin position="393"/>
        <end position="664"/>
    </location>
</feature>
<feature type="splice variant" id="VSP_030919" description="In isoform 3." evidence="6">
    <original>AR</original>
    <variation>GL</variation>
    <location>
        <begin position="633"/>
        <end position="634"/>
    </location>
</feature>
<feature type="splice variant" id="VSP_030920" description="In isoform 3." evidence="6">
    <location>
        <begin position="635"/>
        <end position="664"/>
    </location>
</feature>
<feature type="sequence conflict" description="In Ref. 1; BAC37562." evidence="7" ref="1">
    <original>Q</original>
    <variation>H</variation>
    <location>
        <position position="128"/>
    </location>
</feature>
<keyword id="KW-0007">Acetylation</keyword>
<keyword id="KW-0025">Alternative splicing</keyword>
<keyword id="KW-0037">Angiogenesis</keyword>
<keyword id="KW-0472">Membrane</keyword>
<keyword id="KW-0539">Nucleus</keyword>
<keyword id="KW-0597">Phosphoprotein</keyword>
<keyword id="KW-1185">Reference proteome</keyword>
<keyword id="KW-0812">Transmembrane</keyword>
<keyword id="KW-1133">Transmembrane helix</keyword>
<gene>
    <name type="primary">Tmem201</name>
    <name type="synonym">D4Ertd429e</name>
    <name type="synonym">Net5</name>
    <name type="synonym">Samp1</name>
</gene>
<evidence type="ECO:0000250" key="1">
    <source>
        <dbReference type="UniProtKB" id="Q5SNT2"/>
    </source>
</evidence>
<evidence type="ECO:0000255" key="2"/>
<evidence type="ECO:0000256" key="3">
    <source>
        <dbReference type="SAM" id="MobiDB-lite"/>
    </source>
</evidence>
<evidence type="ECO:0000269" key="4">
    <source>
    </source>
</evidence>
<evidence type="ECO:0000269" key="5">
    <source>
    </source>
</evidence>
<evidence type="ECO:0000303" key="6">
    <source>
    </source>
</evidence>
<evidence type="ECO:0000305" key="7"/>
<evidence type="ECO:0000305" key="8">
    <source>
    </source>
</evidence>
<sequence>MEGVSALLASCPTAGLAGGLGVTACAAAGVVLYRIARRVKPTHTMVNCWFCNHDTLVPYGNRNCWDCPHCEQYNGFQENGDYNKPIPAQYMEHLNHVVSSVPSPRDPAQPQQWVSSQVLLCRRCSHHQTTKIKQLAAFTPREEGRYDEEIEVYRHHLEQMYKLCRPCQAAVEYYIKHQNRQLRALLLSHQFRRREADQAHGQSFSSSAVKAPFQVILLRALAFLACAFLLFTTLYGPSEPFTPGAALPPALPPGGNSSAASDNTTSQAEGWQQLLGLLPEHATEKLHEAWAFGQSHQTSIVAVGLLTCLLAMLLAGRIRLRRIDAFSTCLWALLLGLHLAEHYLQAASPGWLDTLKFSTTSLCCLVGFTAAVATRKSTGPRRFRPRRYFSGDSASLFPSSPSLAVPYPSVTSSPASLFIPTPPGFLPLTKQQLFRSPRRVSPSSLPGRLSRALSLGTIPPLTRTDSGYLFSGSRPPSRVSPAGEVSLSDYFSLLSSSFPASPLPSPAPSVASSVASSSGSLRHRRPLISPARLNLKGQKLLLFSSPGEAPNTPSSSEEFSPPNGSLFIESPQLPQRNHTRDTKHTMEMRSMLARDSARSSHSIKKEDESSQSSTCVVDTTTKGCSEETTPWKARVSPSLVRGLLAVSLAVNALFTSAYLYQSLR</sequence>
<proteinExistence type="evidence at protein level"/>
<comment type="function">
    <text evidence="1 4 5">Critical regulator of angiogenesis and endothelial cell (EC) migration. Promotes the migration of endothelial cells, which is essential for angiogenesis (PubMed:35311970). Interacts with the linker of nucleoskeleton and cytoskeleton (LINC) complex, which plays a vital role in connecting the cell's cytoskeleton to the nuclear envelope. This interaction is essential for maintaining cellular structure and facilitating the movement of endothelial cells, which is critical for proper vascular development (By similarity). Involved in nuclear movement during fibroblast polarization and migration (PubMed:22349700). May recruit Ran GTPase to the nuclear periphery (By similarity).</text>
</comment>
<comment type="function">
    <molecule>Isoform 2</molecule>
    <text evidence="1">May define a distinct membrane domain in the vicinity of the mitotic spindle. Involved in the organization of the nuclear envelope implicating EMD, SUN1 and A-type lamina.</text>
</comment>
<comment type="function">
    <molecule>Isoform 3</molecule>
    <text evidence="8">Proposed to be involved in actin-dependent nuclear movement; via SUN2 associates with transmembrane actin-associated nuclear (TAN) lines which are bound to F-actin cables and couple the nucleus to retrograde actin flow.</text>
</comment>
<comment type="subunit">
    <text evidence="1 4">Isoform 2 interacts with EMD (By similarity). Isoform 3 interacts with SUN2 and LMNA (PubMed:22349700). May bind to Ran GTPase; has a greater affinity for Ran-GTP over Ran-GDP (By similarity).</text>
</comment>
<comment type="interaction">
    <interactant intactId="EBI-12591474">
        <id>A2A8U2-3</id>
    </interactant>
    <interactant intactId="EBI-646914">
        <id>Q8BJS4</id>
        <label>Sun2</label>
    </interactant>
    <organismsDiffer>false</organismsDiffer>
    <experiments>3</experiments>
</comment>
<comment type="subcellular location">
    <molecule>Isoform 2</molecule>
    <subcellularLocation>
        <location evidence="1">Nucleus inner membrane</location>
        <topology evidence="1">Multi-pass membrane protein</topology>
    </subcellularLocation>
    <text evidence="1">The C-terminal of isoform 2 is located on the nucleoplasmic side. During interphase, isoform 2 is distributed in the inner nuclear membrane and during mitosis, it is found in the ER but it also localizes to the polar regions of the mitotic spindle (By similarity).</text>
</comment>
<comment type="alternative products">
    <event type="alternative splicing"/>
    <isoform>
        <id>A2A8U2-1</id>
        <name>1</name>
        <name>Samp1c</name>
        <sequence type="displayed"/>
    </isoform>
    <isoform>
        <id>A2A8U2-2</id>
        <name>2</name>
        <name>Samp1</name>
        <name>Samp1a</name>
        <sequence type="described" ref="VSP_030917 VSP_030918"/>
    </isoform>
    <isoform>
        <id>A2A8U2-3</id>
        <name>3</name>
        <name>Samp1b</name>
        <sequence type="described" ref="VSP_030919 VSP_030920"/>
    </isoform>
</comment>
<comment type="disruption phenotype">
    <text evidence="5">Knockout mice show significant defects in angiogenesis, characterized by reduced extension of the superficial vascular plexus in the retina and defective aortic ring sprouting.</text>
</comment>
<comment type="similarity">
    <text evidence="7">Belongs to the TMEM201 family.</text>
</comment>
<accession>A2A8U2</accession>
<accession>Q3U5F3</accession>
<accession>Q6GQS9</accession>
<accession>Q8BNY3</accession>
<dbReference type="EMBL" id="AK079157">
    <property type="protein sequence ID" value="BAC37562.1"/>
    <property type="molecule type" value="mRNA"/>
</dbReference>
<dbReference type="EMBL" id="AK153631">
    <property type="protein sequence ID" value="BAE32126.1"/>
    <property type="molecule type" value="mRNA"/>
</dbReference>
<dbReference type="EMBL" id="AL626808">
    <property type="status" value="NOT_ANNOTATED_CDS"/>
    <property type="molecule type" value="Genomic_DNA"/>
</dbReference>
<dbReference type="EMBL" id="BC072645">
    <property type="protein sequence ID" value="AAH72645.1"/>
    <property type="molecule type" value="mRNA"/>
</dbReference>
<dbReference type="CCDS" id="CCDS18965.1">
    <molecule id="A2A8U2-2"/>
</dbReference>
<dbReference type="CCDS" id="CCDS71523.1">
    <molecule id="A2A8U2-1"/>
</dbReference>
<dbReference type="RefSeq" id="NP_001271199.1">
    <molecule id="A2A8U2-1"/>
    <property type="nucleotide sequence ID" value="NM_001284270.2"/>
</dbReference>
<dbReference type="RefSeq" id="NP_001271202.1">
    <property type="nucleotide sequence ID" value="NM_001284273.1"/>
</dbReference>
<dbReference type="RefSeq" id="NP_808340.2">
    <molecule id="A2A8U2-2"/>
    <property type="nucleotide sequence ID" value="NM_177672.5"/>
</dbReference>
<dbReference type="BioGRID" id="231056">
    <property type="interactions" value="3"/>
</dbReference>
<dbReference type="FunCoup" id="A2A8U2">
    <property type="interactions" value="662"/>
</dbReference>
<dbReference type="IntAct" id="A2A8U2">
    <property type="interactions" value="3"/>
</dbReference>
<dbReference type="STRING" id="10090.ENSMUSP00000101312"/>
<dbReference type="GlyGen" id="A2A8U2">
    <property type="glycosylation" value="2 sites, 1 O-linked glycan (1 site)"/>
</dbReference>
<dbReference type="iPTMnet" id="A2A8U2"/>
<dbReference type="PhosphoSitePlus" id="A2A8U2"/>
<dbReference type="jPOST" id="A2A8U2"/>
<dbReference type="PaxDb" id="10090-ENSMUSP00000050481"/>
<dbReference type="PeptideAtlas" id="A2A8U2"/>
<dbReference type="ProteomicsDB" id="259547">
    <molecule id="A2A8U2-1"/>
</dbReference>
<dbReference type="ProteomicsDB" id="259548">
    <molecule id="A2A8U2-2"/>
</dbReference>
<dbReference type="ProteomicsDB" id="259549">
    <molecule id="A2A8U2-3"/>
</dbReference>
<dbReference type="Pumba" id="A2A8U2"/>
<dbReference type="Antibodypedia" id="62878">
    <property type="antibodies" value="21 antibodies from 8 providers"/>
</dbReference>
<dbReference type="DNASU" id="230917"/>
<dbReference type="Ensembl" id="ENSMUST00000054459.11">
    <molecule id="A2A8U2-3"/>
    <property type="protein sequence ID" value="ENSMUSP00000050481.5"/>
    <property type="gene ID" value="ENSMUSG00000044700.16"/>
</dbReference>
<dbReference type="Ensembl" id="ENSMUST00000103208.2">
    <molecule id="A2A8U2-2"/>
    <property type="protein sequence ID" value="ENSMUSP00000099497.2"/>
    <property type="gene ID" value="ENSMUSG00000044700.16"/>
</dbReference>
<dbReference type="Ensembl" id="ENSMUST00000105687.9">
    <molecule id="A2A8U2-1"/>
    <property type="protein sequence ID" value="ENSMUSP00000101312.3"/>
    <property type="gene ID" value="ENSMUSG00000044700.16"/>
</dbReference>
<dbReference type="GeneID" id="230917"/>
<dbReference type="KEGG" id="mmu:230917"/>
<dbReference type="UCSC" id="uc008vwz.2">
    <molecule id="A2A8U2-1"/>
    <property type="organism name" value="mouse"/>
</dbReference>
<dbReference type="UCSC" id="uc008vxa.3">
    <molecule id="A2A8U2-3"/>
    <property type="organism name" value="mouse"/>
</dbReference>
<dbReference type="UCSC" id="uc008vxc.2">
    <molecule id="A2A8U2-2"/>
    <property type="organism name" value="mouse"/>
</dbReference>
<dbReference type="AGR" id="MGI:1196277"/>
<dbReference type="CTD" id="199953"/>
<dbReference type="MGI" id="MGI:1196277">
    <property type="gene designation" value="Tmem201"/>
</dbReference>
<dbReference type="VEuPathDB" id="HostDB:ENSMUSG00000044700"/>
<dbReference type="eggNOG" id="KOG4623">
    <property type="taxonomic scope" value="Eukaryota"/>
</dbReference>
<dbReference type="GeneTree" id="ENSGT00390000002713"/>
<dbReference type="HOGENOM" id="CLU_479766_0_0_1"/>
<dbReference type="InParanoid" id="A2A8U2"/>
<dbReference type="OMA" id="LCLGTMP"/>
<dbReference type="OrthoDB" id="5966927at2759"/>
<dbReference type="PhylomeDB" id="A2A8U2"/>
<dbReference type="TreeFam" id="TF106107"/>
<dbReference type="BioGRID-ORCS" id="230917">
    <property type="hits" value="4 hits in 76 CRISPR screens"/>
</dbReference>
<dbReference type="ChiTaRS" id="Tmem201">
    <property type="organism name" value="mouse"/>
</dbReference>
<dbReference type="PRO" id="PR:A2A8U2"/>
<dbReference type="Proteomes" id="UP000000589">
    <property type="component" value="Chromosome 4"/>
</dbReference>
<dbReference type="RNAct" id="A2A8U2">
    <property type="molecule type" value="protein"/>
</dbReference>
<dbReference type="Bgee" id="ENSMUSG00000044700">
    <property type="expression patterns" value="Expressed in secondary oocyte and 227 other cell types or tissues"/>
</dbReference>
<dbReference type="GO" id="GO:0005637">
    <property type="term" value="C:nuclear inner membrane"/>
    <property type="evidence" value="ECO:0000250"/>
    <property type="project" value="UniProtKB"/>
</dbReference>
<dbReference type="GO" id="GO:0031965">
    <property type="term" value="C:nuclear membrane"/>
    <property type="evidence" value="ECO:0000314"/>
    <property type="project" value="MGI"/>
</dbReference>
<dbReference type="GO" id="GO:0051015">
    <property type="term" value="F:actin filament binding"/>
    <property type="evidence" value="ECO:0000314"/>
    <property type="project" value="MGI"/>
</dbReference>
<dbReference type="GO" id="GO:0005521">
    <property type="term" value="F:lamin binding"/>
    <property type="evidence" value="ECO:0000314"/>
    <property type="project" value="MGI"/>
</dbReference>
<dbReference type="GO" id="GO:0001525">
    <property type="term" value="P:angiogenesis"/>
    <property type="evidence" value="ECO:0000315"/>
    <property type="project" value="UniProtKB"/>
</dbReference>
<dbReference type="GO" id="GO:0010761">
    <property type="term" value="P:fibroblast migration"/>
    <property type="evidence" value="ECO:0000315"/>
    <property type="project" value="MGI"/>
</dbReference>
<dbReference type="GO" id="GO:0007097">
    <property type="term" value="P:nuclear migration"/>
    <property type="evidence" value="ECO:0000315"/>
    <property type="project" value="MGI"/>
</dbReference>
<dbReference type="GO" id="GO:0010595">
    <property type="term" value="P:positive regulation of endothelial cell migration"/>
    <property type="evidence" value="ECO:0000250"/>
    <property type="project" value="UniProtKB"/>
</dbReference>
<dbReference type="InterPro" id="IPR018617">
    <property type="entry name" value="Ima1_N"/>
</dbReference>
<dbReference type="InterPro" id="IPR040041">
    <property type="entry name" value="TMEM201"/>
</dbReference>
<dbReference type="InterPro" id="IPR018861">
    <property type="entry name" value="TMEM201_C"/>
</dbReference>
<dbReference type="PANTHER" id="PTHR28646">
    <property type="entry name" value="TRANSMEMBRANE PROTEIN 201"/>
    <property type="match status" value="1"/>
</dbReference>
<dbReference type="PANTHER" id="PTHR28646:SF1">
    <property type="entry name" value="TRANSMEMBRANE PROTEIN 201"/>
    <property type="match status" value="1"/>
</dbReference>
<dbReference type="Pfam" id="PF10476">
    <property type="entry name" value="DUF2448"/>
    <property type="match status" value="1"/>
</dbReference>
<dbReference type="Pfam" id="PF09779">
    <property type="entry name" value="Ima1_N"/>
    <property type="match status" value="1"/>
</dbReference>